<comment type="function">
    <text evidence="1">Transglycosidase operating by a ping-pong reaction mechanism. Involved in the synthesis of raffinose, a major soluble carbohydrate in seeds, roots and tubers. Able to utilize D-ononitol and D-pinitol as acceptors. May also act as a glycoside hydrolase.</text>
</comment>
<comment type="catalytic activity">
    <reaction evidence="1">
        <text>alpha-D-galactosyl-(1-&gt;3)-1D-myo-inositol + sucrose = raffinose + myo-inositol</text>
        <dbReference type="Rhea" id="RHEA:20161"/>
        <dbReference type="ChEBI" id="CHEBI:16634"/>
        <dbReference type="ChEBI" id="CHEBI:17268"/>
        <dbReference type="ChEBI" id="CHEBI:17505"/>
        <dbReference type="ChEBI" id="CHEBI:17992"/>
        <dbReference type="EC" id="2.4.1.82"/>
    </reaction>
</comment>
<comment type="activity regulation">
    <text evidence="1">Inhibited by 1-deoxygalactonojirimycin. Not inhibited by stachyose. Strong inhibition of the hydrolytic activity by sucrose.</text>
</comment>
<comment type="biophysicochemical properties">
    <kinetics>
        <KM evidence="1">7.3 mM for galactinol for the raffinose synthesis activity</KM>
        <KM evidence="1">22.9 mM for sucrose for the raffinose synthesis activity</KM>
        <KM evidence="1">1 mM for galactinol for the galactinol hydrolysis activity</KM>
        <Vmax evidence="1">199.2 pmol/sec/mg enzyme for the raffinose synthesis activity</Vmax>
        <Vmax evidence="1">27.3 pmol/sec/mg enzyme for the galactinol hydrolysis activity</Vmax>
        <text>partially purified enzyme.</text>
    </kinetics>
    <phDependence>
        <text evidence="1">Optimum pH is 7.0.</text>
    </phDependence>
</comment>
<comment type="similarity">
    <text evidence="2">Belongs to the glycosyl hydrolases 36 family.</text>
</comment>
<proteinExistence type="evidence at protein level"/>
<name>RFS_PEA</name>
<evidence type="ECO:0000269" key="1">
    <source>
    </source>
</evidence>
<evidence type="ECO:0000305" key="2"/>
<accession>Q8VWN6</accession>
<organism>
    <name type="scientific">Pisum sativum</name>
    <name type="common">Garden pea</name>
    <name type="synonym">Lathyrus oleraceus</name>
    <dbReference type="NCBI Taxonomy" id="3888"/>
    <lineage>
        <taxon>Eukaryota</taxon>
        <taxon>Viridiplantae</taxon>
        <taxon>Streptophyta</taxon>
        <taxon>Embryophyta</taxon>
        <taxon>Tracheophyta</taxon>
        <taxon>Spermatophyta</taxon>
        <taxon>Magnoliopsida</taxon>
        <taxon>eudicotyledons</taxon>
        <taxon>Gunneridae</taxon>
        <taxon>Pentapetalae</taxon>
        <taxon>rosids</taxon>
        <taxon>fabids</taxon>
        <taxon>Fabales</taxon>
        <taxon>Fabaceae</taxon>
        <taxon>Papilionoideae</taxon>
        <taxon>50 kb inversion clade</taxon>
        <taxon>NPAAA clade</taxon>
        <taxon>Hologalegina</taxon>
        <taxon>IRL clade</taxon>
        <taxon>Fabeae</taxon>
        <taxon>Pisum</taxon>
    </lineage>
</organism>
<reference key="1">
    <citation type="journal article" date="2002" name="Planta">
        <title>Functional expression of a cDNA encoding pea (Pisum sativum L.) raffinose synthase, partial purification of the enzyme from maturing seeds, and steady-state kinetic analysis of raffinose synthesis.</title>
        <authorList>
            <person name="Peterbauer T."/>
            <person name="Mach L."/>
            <person name="Mucha J."/>
            <person name="Richter A."/>
        </authorList>
    </citation>
    <scope>NUCLEOTIDE SEQUENCE [MRNA]</scope>
    <scope>FUNCTION</scope>
    <scope>CATALYTIC ACTIVITY</scope>
    <scope>ACTIVITY REGULATION</scope>
    <scope>BIOPHYSICOCHEMICAL PROPERTIES</scope>
    <source>
        <strain>cv. Kelvedon Wonder</strain>
        <tissue>Seed</tissue>
    </source>
</reference>
<sequence>MAPPSITKTATQQDVISTVDIGNSPLLSISLDQSRNFLVNGHPFLTQVPPNITTTTTSTPSPFLDFKSNKDTIANNNNTLQQQGCFVGFNTTEAKSHHVVPLGKLKGIKFTSIFRFKVWWTTHWVGTNGHELQHETQILILDKNISLGRPYVLLLPILENSFRTSLQPGLNDYVDMSVESGSTHVTGSTFKACLYLHLSNDPYRLVKEAVKVIQTKLGTFKTLEEKTPPSIIEKFGWCTWDAFYLKVHPKGVWEGVKALTDGGCPPGFVIIDDGWQSISHDDDDPVTERDGMNRTSAGEQMPCRLIKYEENYKFREYENGDNGGKKGLVGFVRDLKEEFRSVESVYVWHALCGYWGGVRPKVCGMPEAKVVVPKLSPGVKMTMEDLAVDKIVENGVGLVPPNLAQEMFDGIHSHLESAGIDGVKVDVIHLLELLSEEYGGRVELAKAYYKALTSSVNKHFKGNGVIASMEHCNDFFLLGTEAISLGRVGDDFWCCDPSGDPNGTYWLQGCHMVHCAYNSLWMGNFIHPDWDMFQSTHPCAEFHAASRAISGGPVYVSDCVGNHNFKLLKSFVLPDGSILRCQHYALPTRDCLFEDPLHNGKTMLKIWNLNKYAGVLGLFNCQGGGWCPETRRNKSASEFSHAVTCYASPEDIEWCNGKTPMDIKGVDVFAVYFFKEKKLSLMKCSDRLEVSLEPFSFELMTVSPLKVFSKRLIQFAPIGLVNMLNSGGAVQSLEFDDSASLVKIGVRGCGELSVFASEKPVCCKIDGVSVEFDYEDKMVRVQILWPGSSTLSLVEFLF</sequence>
<feature type="chain" id="PRO_0000389254" description="Galactinol--sucrose galactosyltransferase">
    <location>
        <begin position="1"/>
        <end position="798"/>
    </location>
</feature>
<protein>
    <recommendedName>
        <fullName>Galactinol--sucrose galactosyltransferase</fullName>
        <ecNumber>2.4.1.82</ecNumber>
    </recommendedName>
    <alternativeName>
        <fullName>Raffinose synthase</fullName>
    </alternativeName>
</protein>
<gene>
    <name type="primary">RFS</name>
</gene>
<keyword id="KW-0119">Carbohydrate metabolism</keyword>
<keyword id="KW-0328">Glycosyltransferase</keyword>
<keyword id="KW-0808">Transferase</keyword>
<dbReference type="EC" id="2.4.1.82"/>
<dbReference type="EMBL" id="AJ426475">
    <property type="protein sequence ID" value="CAD20127.2"/>
    <property type="molecule type" value="mRNA"/>
</dbReference>
<dbReference type="SMR" id="Q8VWN6"/>
<dbReference type="CAZy" id="GH36">
    <property type="family name" value="Glycoside Hydrolase Family 36"/>
</dbReference>
<dbReference type="EnsemblPlants" id="Psat0s2597g0160.1">
    <property type="protein sequence ID" value="Psat0s2597g0160.1.cds"/>
    <property type="gene ID" value="Psat0s2597g0160"/>
</dbReference>
<dbReference type="Gramene" id="Psat0s2597g0160.1">
    <property type="protein sequence ID" value="Psat0s2597g0160.1.cds"/>
    <property type="gene ID" value="Psat0s2597g0160"/>
</dbReference>
<dbReference type="BioCyc" id="MetaCyc:MONOMER-12496"/>
<dbReference type="BRENDA" id="2.4.1.82">
    <property type="organism ID" value="4872"/>
</dbReference>
<dbReference type="GO" id="GO:0047274">
    <property type="term" value="F:galactinol-sucrose galactosyltransferase activity"/>
    <property type="evidence" value="ECO:0007669"/>
    <property type="project" value="UniProtKB-EC"/>
</dbReference>
<dbReference type="FunFam" id="3.20.20.70:FF:000311">
    <property type="entry name" value="Probable galactinol--sucrose galactosyltransferase 5"/>
    <property type="match status" value="1"/>
</dbReference>
<dbReference type="Gene3D" id="3.20.20.70">
    <property type="entry name" value="Aldolase class I"/>
    <property type="match status" value="1"/>
</dbReference>
<dbReference type="InterPro" id="IPR013785">
    <property type="entry name" value="Aldolase_TIM"/>
</dbReference>
<dbReference type="InterPro" id="IPR017853">
    <property type="entry name" value="Glycoside_hydrolase_SF"/>
</dbReference>
<dbReference type="InterPro" id="IPR008811">
    <property type="entry name" value="Glycosyl_hydrolases_36"/>
</dbReference>
<dbReference type="PANTHER" id="PTHR31268">
    <property type="match status" value="1"/>
</dbReference>
<dbReference type="PANTHER" id="PTHR31268:SF37">
    <property type="entry name" value="GALACTINOL--SUCROSE GALACTOSYLTRANSFERASE"/>
    <property type="match status" value="1"/>
</dbReference>
<dbReference type="Pfam" id="PF05691">
    <property type="entry name" value="Raffinose_syn"/>
    <property type="match status" value="1"/>
</dbReference>
<dbReference type="SUPFAM" id="SSF51445">
    <property type="entry name" value="(Trans)glycosidases"/>
    <property type="match status" value="1"/>
</dbReference>